<reference key="1">
    <citation type="journal article" date="2002" name="Proc. Natl. Acad. Sci. U.S.A.">
        <title>Extensive mosaic structure revealed by the complete genome sequence of uropathogenic Escherichia coli.</title>
        <authorList>
            <person name="Welch R.A."/>
            <person name="Burland V."/>
            <person name="Plunkett G. III"/>
            <person name="Redford P."/>
            <person name="Roesch P."/>
            <person name="Rasko D."/>
            <person name="Buckles E.L."/>
            <person name="Liou S.-R."/>
            <person name="Boutin A."/>
            <person name="Hackett J."/>
            <person name="Stroud D."/>
            <person name="Mayhew G.F."/>
            <person name="Rose D.J."/>
            <person name="Zhou S."/>
            <person name="Schwartz D.C."/>
            <person name="Perna N.T."/>
            <person name="Mobley H.L.T."/>
            <person name="Donnenberg M.S."/>
            <person name="Blattner F.R."/>
        </authorList>
    </citation>
    <scope>NUCLEOTIDE SEQUENCE [LARGE SCALE GENOMIC DNA]</scope>
    <source>
        <strain>CFT073 / ATCC 700928 / UPEC</strain>
    </source>
</reference>
<evidence type="ECO:0000250" key="1"/>
<evidence type="ECO:0000305" key="2"/>
<dbReference type="EMBL" id="AE014075">
    <property type="protein sequence ID" value="AAN82378.1"/>
    <property type="molecule type" value="Genomic_DNA"/>
</dbReference>
<dbReference type="RefSeq" id="WP_001148001.1">
    <property type="nucleotide sequence ID" value="NZ_CP051263.1"/>
</dbReference>
<dbReference type="SMR" id="P0A6W6"/>
<dbReference type="STRING" id="199310.c3938"/>
<dbReference type="GeneID" id="93778800"/>
<dbReference type="KEGG" id="ecc:c3938"/>
<dbReference type="eggNOG" id="COG0782">
    <property type="taxonomic scope" value="Bacteria"/>
</dbReference>
<dbReference type="HOGENOM" id="CLU_101379_2_0_6"/>
<dbReference type="BioCyc" id="ECOL199310:C3938-MONOMER"/>
<dbReference type="Proteomes" id="UP000001410">
    <property type="component" value="Chromosome"/>
</dbReference>
<dbReference type="GO" id="GO:0003677">
    <property type="term" value="F:DNA binding"/>
    <property type="evidence" value="ECO:0007669"/>
    <property type="project" value="UniProtKB-UniRule"/>
</dbReference>
<dbReference type="GO" id="GO:0070063">
    <property type="term" value="F:RNA polymerase binding"/>
    <property type="evidence" value="ECO:0007669"/>
    <property type="project" value="InterPro"/>
</dbReference>
<dbReference type="GO" id="GO:0006354">
    <property type="term" value="P:DNA-templated transcription elongation"/>
    <property type="evidence" value="ECO:0007669"/>
    <property type="project" value="TreeGrafter"/>
</dbReference>
<dbReference type="GO" id="GO:0032784">
    <property type="term" value="P:regulation of DNA-templated transcription elongation"/>
    <property type="evidence" value="ECO:0007669"/>
    <property type="project" value="UniProtKB-UniRule"/>
</dbReference>
<dbReference type="FunFam" id="1.10.287.180:FF:000001">
    <property type="entry name" value="Transcription elongation factor GreA"/>
    <property type="match status" value="1"/>
</dbReference>
<dbReference type="FunFam" id="3.10.50.30:FF:000001">
    <property type="entry name" value="Transcription elongation factor GreA"/>
    <property type="match status" value="1"/>
</dbReference>
<dbReference type="Gene3D" id="3.10.50.30">
    <property type="entry name" value="Transcription elongation factor, GreA/GreB, C-terminal domain"/>
    <property type="match status" value="1"/>
</dbReference>
<dbReference type="Gene3D" id="1.10.287.180">
    <property type="entry name" value="Transcription elongation factor, GreA/GreB, N-terminal domain"/>
    <property type="match status" value="1"/>
</dbReference>
<dbReference type="HAMAP" id="MF_00105">
    <property type="entry name" value="GreA_GreB"/>
    <property type="match status" value="1"/>
</dbReference>
<dbReference type="InterPro" id="IPR036953">
    <property type="entry name" value="GreA/GreB_C_sf"/>
</dbReference>
<dbReference type="InterPro" id="IPR018151">
    <property type="entry name" value="TF_GreA/GreB_CS"/>
</dbReference>
<dbReference type="InterPro" id="IPR006359">
    <property type="entry name" value="Tscrpt_elong_fac_GreA"/>
</dbReference>
<dbReference type="InterPro" id="IPR028624">
    <property type="entry name" value="Tscrpt_elong_fac_GreA/B"/>
</dbReference>
<dbReference type="InterPro" id="IPR001437">
    <property type="entry name" value="Tscrpt_elong_fac_GreA/B_C"/>
</dbReference>
<dbReference type="InterPro" id="IPR023459">
    <property type="entry name" value="Tscrpt_elong_fac_GreA/B_fam"/>
</dbReference>
<dbReference type="InterPro" id="IPR022691">
    <property type="entry name" value="Tscrpt_elong_fac_GreA/B_N"/>
</dbReference>
<dbReference type="InterPro" id="IPR036805">
    <property type="entry name" value="Tscrpt_elong_fac_GreA/B_N_sf"/>
</dbReference>
<dbReference type="NCBIfam" id="TIGR01462">
    <property type="entry name" value="greA"/>
    <property type="match status" value="1"/>
</dbReference>
<dbReference type="NCBIfam" id="NF001261">
    <property type="entry name" value="PRK00226.1-2"/>
    <property type="match status" value="1"/>
</dbReference>
<dbReference type="NCBIfam" id="NF001263">
    <property type="entry name" value="PRK00226.1-4"/>
    <property type="match status" value="1"/>
</dbReference>
<dbReference type="NCBIfam" id="NF001264">
    <property type="entry name" value="PRK00226.1-5"/>
    <property type="match status" value="1"/>
</dbReference>
<dbReference type="PANTHER" id="PTHR30437">
    <property type="entry name" value="TRANSCRIPTION ELONGATION FACTOR GREA"/>
    <property type="match status" value="1"/>
</dbReference>
<dbReference type="PANTHER" id="PTHR30437:SF4">
    <property type="entry name" value="TRANSCRIPTION ELONGATION FACTOR GREA"/>
    <property type="match status" value="1"/>
</dbReference>
<dbReference type="Pfam" id="PF01272">
    <property type="entry name" value="GreA_GreB"/>
    <property type="match status" value="1"/>
</dbReference>
<dbReference type="Pfam" id="PF03449">
    <property type="entry name" value="GreA_GreB_N"/>
    <property type="match status" value="1"/>
</dbReference>
<dbReference type="PIRSF" id="PIRSF006092">
    <property type="entry name" value="GreA_GreB"/>
    <property type="match status" value="1"/>
</dbReference>
<dbReference type="SUPFAM" id="SSF54534">
    <property type="entry name" value="FKBP-like"/>
    <property type="match status" value="1"/>
</dbReference>
<dbReference type="SUPFAM" id="SSF46557">
    <property type="entry name" value="GreA transcript cleavage protein, N-terminal domain"/>
    <property type="match status" value="1"/>
</dbReference>
<dbReference type="PROSITE" id="PS00829">
    <property type="entry name" value="GREAB_1"/>
    <property type="match status" value="1"/>
</dbReference>
<dbReference type="PROSITE" id="PS00830">
    <property type="entry name" value="GREAB_2"/>
    <property type="match status" value="1"/>
</dbReference>
<protein>
    <recommendedName>
        <fullName>Transcription elongation factor GreA</fullName>
    </recommendedName>
    <alternativeName>
        <fullName>Transcript cleavage factor GreA</fullName>
    </alternativeName>
</protein>
<feature type="chain" id="PRO_0000176923" description="Transcription elongation factor GreA">
    <location>
        <begin position="1"/>
        <end position="158"/>
    </location>
</feature>
<keyword id="KW-0238">DNA-binding</keyword>
<keyword id="KW-1185">Reference proteome</keyword>
<keyword id="KW-0804">Transcription</keyword>
<keyword id="KW-0805">Transcription regulation</keyword>
<accession>P0A6W6</accession>
<accession>P21346</accession>
<accession>P78111</accession>
<accession>Q8X9K9</accession>
<name>GREA_ECOL6</name>
<organism>
    <name type="scientific">Escherichia coli O6:H1 (strain CFT073 / ATCC 700928 / UPEC)</name>
    <dbReference type="NCBI Taxonomy" id="199310"/>
    <lineage>
        <taxon>Bacteria</taxon>
        <taxon>Pseudomonadati</taxon>
        <taxon>Pseudomonadota</taxon>
        <taxon>Gammaproteobacteria</taxon>
        <taxon>Enterobacterales</taxon>
        <taxon>Enterobacteriaceae</taxon>
        <taxon>Escherichia</taxon>
    </lineage>
</organism>
<sequence>MQAIPMTLRGAEKLREELDFLKSVRRPEIIAAIAEAREHGDLKENAEYHAAREQQGFCEGRIKDIEAKLSNAQVIDVTKMPNNGRVIFGATVTVLNLDSDEEQTYRIVGDDEADFKQNLISVNSPIARGLIGKEEDDVVVIKTPGGEVEFEVIKVEYL</sequence>
<proteinExistence type="inferred from homology"/>
<gene>
    <name type="primary">greA</name>
    <name type="ordered locus">c3938</name>
</gene>
<comment type="function">
    <text evidence="1">Necessary for efficient RNA polymerase transcription elongation past template-encoded arresting sites. The arresting sites in DNA have the property of trapping a certain fraction of elongating RNA polymerases that pass through, resulting in locked ternary complexes. Cleavage of the nascent transcript by cleavage factors such as GreA or GreB allows the resumption of elongation from the new 3'terminus. GreA releases sequences of 2 to 3 nucleotides (By similarity).</text>
</comment>
<comment type="similarity">
    <text evidence="2">Belongs to the GreA/GreB family.</text>
</comment>